<proteinExistence type="inferred from homology"/>
<comment type="function">
    <text evidence="1">This is one of the proteins that bind and probably mediate the attachment of the 5S RNA into the large ribosomal subunit, where it forms part of the central protuberance. In the 70S ribosome it contacts protein S13 of the 30S subunit (bridge B1b), connecting the 2 subunits; this bridge is implicated in subunit movement. Contacts the P site tRNA; the 5S rRNA and some of its associated proteins might help stabilize positioning of ribosome-bound tRNAs.</text>
</comment>
<comment type="subunit">
    <text evidence="1">Part of the 50S ribosomal subunit; part of the 5S rRNA/L5/L18/L25 subcomplex. Contacts the 5S rRNA and the P site tRNA. Forms a bridge to the 30S subunit in the 70S ribosome.</text>
</comment>
<comment type="similarity">
    <text evidence="1">Belongs to the universal ribosomal protein uL5 family.</text>
</comment>
<dbReference type="EMBL" id="CP001196">
    <property type="protein sequence ID" value="ACI92817.1"/>
    <property type="molecule type" value="Genomic_DNA"/>
</dbReference>
<dbReference type="EMBL" id="CP002826">
    <property type="protein sequence ID" value="AEI07018.1"/>
    <property type="molecule type" value="Genomic_DNA"/>
</dbReference>
<dbReference type="RefSeq" id="WP_012562846.1">
    <property type="nucleotide sequence ID" value="NC_015684.1"/>
</dbReference>
<dbReference type="SMR" id="B6JEX7"/>
<dbReference type="STRING" id="504832.OCA5_c23180"/>
<dbReference type="KEGG" id="oca:OCAR_5689"/>
<dbReference type="KEGG" id="ocg:OCA5_c23180"/>
<dbReference type="PATRIC" id="fig|504832.7.peg.2443"/>
<dbReference type="eggNOG" id="COG0094">
    <property type="taxonomic scope" value="Bacteria"/>
</dbReference>
<dbReference type="HOGENOM" id="CLU_061015_2_1_5"/>
<dbReference type="OrthoDB" id="9806626at2"/>
<dbReference type="Proteomes" id="UP000007730">
    <property type="component" value="Chromosome"/>
</dbReference>
<dbReference type="GO" id="GO:1990904">
    <property type="term" value="C:ribonucleoprotein complex"/>
    <property type="evidence" value="ECO:0007669"/>
    <property type="project" value="UniProtKB-KW"/>
</dbReference>
<dbReference type="GO" id="GO:0005840">
    <property type="term" value="C:ribosome"/>
    <property type="evidence" value="ECO:0007669"/>
    <property type="project" value="UniProtKB-KW"/>
</dbReference>
<dbReference type="GO" id="GO:0019843">
    <property type="term" value="F:rRNA binding"/>
    <property type="evidence" value="ECO:0007669"/>
    <property type="project" value="UniProtKB-UniRule"/>
</dbReference>
<dbReference type="GO" id="GO:0003735">
    <property type="term" value="F:structural constituent of ribosome"/>
    <property type="evidence" value="ECO:0007669"/>
    <property type="project" value="InterPro"/>
</dbReference>
<dbReference type="GO" id="GO:0000049">
    <property type="term" value="F:tRNA binding"/>
    <property type="evidence" value="ECO:0007669"/>
    <property type="project" value="UniProtKB-UniRule"/>
</dbReference>
<dbReference type="GO" id="GO:0006412">
    <property type="term" value="P:translation"/>
    <property type="evidence" value="ECO:0007669"/>
    <property type="project" value="UniProtKB-UniRule"/>
</dbReference>
<dbReference type="FunFam" id="3.30.1440.10:FF:000001">
    <property type="entry name" value="50S ribosomal protein L5"/>
    <property type="match status" value="1"/>
</dbReference>
<dbReference type="Gene3D" id="3.30.1440.10">
    <property type="match status" value="1"/>
</dbReference>
<dbReference type="HAMAP" id="MF_01333_B">
    <property type="entry name" value="Ribosomal_uL5_B"/>
    <property type="match status" value="1"/>
</dbReference>
<dbReference type="InterPro" id="IPR002132">
    <property type="entry name" value="Ribosomal_uL5"/>
</dbReference>
<dbReference type="InterPro" id="IPR020930">
    <property type="entry name" value="Ribosomal_uL5_bac-type"/>
</dbReference>
<dbReference type="InterPro" id="IPR031309">
    <property type="entry name" value="Ribosomal_uL5_C"/>
</dbReference>
<dbReference type="InterPro" id="IPR020929">
    <property type="entry name" value="Ribosomal_uL5_CS"/>
</dbReference>
<dbReference type="InterPro" id="IPR022803">
    <property type="entry name" value="Ribosomal_uL5_dom_sf"/>
</dbReference>
<dbReference type="InterPro" id="IPR031310">
    <property type="entry name" value="Ribosomal_uL5_N"/>
</dbReference>
<dbReference type="NCBIfam" id="NF000585">
    <property type="entry name" value="PRK00010.1"/>
    <property type="match status" value="1"/>
</dbReference>
<dbReference type="PANTHER" id="PTHR11994">
    <property type="entry name" value="60S RIBOSOMAL PROTEIN L11-RELATED"/>
    <property type="match status" value="1"/>
</dbReference>
<dbReference type="Pfam" id="PF00281">
    <property type="entry name" value="Ribosomal_L5"/>
    <property type="match status" value="1"/>
</dbReference>
<dbReference type="Pfam" id="PF00673">
    <property type="entry name" value="Ribosomal_L5_C"/>
    <property type="match status" value="1"/>
</dbReference>
<dbReference type="PIRSF" id="PIRSF002161">
    <property type="entry name" value="Ribosomal_L5"/>
    <property type="match status" value="1"/>
</dbReference>
<dbReference type="SUPFAM" id="SSF55282">
    <property type="entry name" value="RL5-like"/>
    <property type="match status" value="1"/>
</dbReference>
<dbReference type="PROSITE" id="PS00358">
    <property type="entry name" value="RIBOSOMAL_L5"/>
    <property type="match status" value="1"/>
</dbReference>
<keyword id="KW-1185">Reference proteome</keyword>
<keyword id="KW-0687">Ribonucleoprotein</keyword>
<keyword id="KW-0689">Ribosomal protein</keyword>
<keyword id="KW-0694">RNA-binding</keyword>
<keyword id="KW-0699">rRNA-binding</keyword>
<keyword id="KW-0820">tRNA-binding</keyword>
<reference key="1">
    <citation type="journal article" date="2008" name="J. Bacteriol.">
        <title>Genome sequence of the chemolithoautotrophic bacterium Oligotropha carboxidovorans OM5T.</title>
        <authorList>
            <person name="Paul D."/>
            <person name="Bridges S."/>
            <person name="Burgess S.C."/>
            <person name="Dandass Y."/>
            <person name="Lawrence M.L."/>
        </authorList>
    </citation>
    <scope>NUCLEOTIDE SEQUENCE [LARGE SCALE GENOMIC DNA]</scope>
    <source>
        <strain>ATCC 49405 / DSM 1227 / KCTC 32145 / OM5</strain>
    </source>
</reference>
<reference key="2">
    <citation type="journal article" date="2011" name="J. Bacteriol.">
        <title>Complete genome sequences of the chemolithoautotrophic Oligotropha carboxidovorans strains OM4 and OM5.</title>
        <authorList>
            <person name="Volland S."/>
            <person name="Rachinger M."/>
            <person name="Strittmatter A."/>
            <person name="Daniel R."/>
            <person name="Gottschalk G."/>
            <person name="Meyer O."/>
        </authorList>
    </citation>
    <scope>NUCLEOTIDE SEQUENCE [LARGE SCALE GENOMIC DNA]</scope>
    <source>
        <strain>ATCC 49405 / DSM 1227 / KCTC 32145 / OM5</strain>
    </source>
</reference>
<protein>
    <recommendedName>
        <fullName evidence="1">Large ribosomal subunit protein uL5</fullName>
    </recommendedName>
    <alternativeName>
        <fullName evidence="2">50S ribosomal protein L5</fullName>
    </alternativeName>
</protein>
<sequence length="185" mass="20804">MAETAYIPRLREVYDRDIRSKLTEQFGLTNVMQVPRLDKVVINMGVGEAVNDRKKVELAAGDLALIAGQKPIVTHSRKAIATFKLREGQAIGAKVTLRKAKMYEFIDRLINVALPRVRDFRGLNPKSFDGRGNYSLGLKEHIVFPEIDYDKSGESWGMDITVCTTAATDEQARALLTAFNFPFRQ</sequence>
<gene>
    <name evidence="1" type="primary">rplE</name>
    <name type="ordered locus">OCAR_5689</name>
    <name type="ordered locus">OCA5_c23180</name>
</gene>
<name>RL5_AFIC5</name>
<accession>B6JEX7</accession>
<accession>F8BZB5</accession>
<feature type="chain" id="PRO_1000142427" description="Large ribosomal subunit protein uL5">
    <location>
        <begin position="1"/>
        <end position="185"/>
    </location>
</feature>
<organism>
    <name type="scientific">Afipia carboxidovorans (strain ATCC 49405 / DSM 1227 / KCTC 32145 / OM5)</name>
    <name type="common">Oligotropha carboxidovorans</name>
    <dbReference type="NCBI Taxonomy" id="504832"/>
    <lineage>
        <taxon>Bacteria</taxon>
        <taxon>Pseudomonadati</taxon>
        <taxon>Pseudomonadota</taxon>
        <taxon>Alphaproteobacteria</taxon>
        <taxon>Hyphomicrobiales</taxon>
        <taxon>Nitrobacteraceae</taxon>
        <taxon>Afipia</taxon>
    </lineage>
</organism>
<evidence type="ECO:0000255" key="1">
    <source>
        <dbReference type="HAMAP-Rule" id="MF_01333"/>
    </source>
</evidence>
<evidence type="ECO:0000305" key="2"/>